<name>EAF6_KLULA</name>
<protein>
    <recommendedName>
        <fullName>Chromatin modification-related protein EAF6</fullName>
    </recommendedName>
</protein>
<gene>
    <name type="primary">EAF6</name>
    <name type="ordered locus">KLLA0E06303g</name>
</gene>
<keyword id="KW-0156">Chromatin regulator</keyword>
<keyword id="KW-0175">Coiled coil</keyword>
<keyword id="KW-0227">DNA damage</keyword>
<keyword id="KW-0234">DNA repair</keyword>
<keyword id="KW-0539">Nucleus</keyword>
<keyword id="KW-1185">Reference proteome</keyword>
<keyword id="KW-0804">Transcription</keyword>
<keyword id="KW-0805">Transcription regulation</keyword>
<dbReference type="EMBL" id="CR382125">
    <property type="protein sequence ID" value="CAG99320.1"/>
    <property type="molecule type" value="Genomic_DNA"/>
</dbReference>
<dbReference type="RefSeq" id="XP_454233.1">
    <property type="nucleotide sequence ID" value="XM_454233.1"/>
</dbReference>
<dbReference type="SMR" id="Q6CPA6"/>
<dbReference type="FunCoup" id="Q6CPA6">
    <property type="interactions" value="130"/>
</dbReference>
<dbReference type="STRING" id="284590.Q6CPA6"/>
<dbReference type="PaxDb" id="284590-Q6CPA6"/>
<dbReference type="KEGG" id="kla:KLLA0_E06337g"/>
<dbReference type="eggNOG" id="KOG3856">
    <property type="taxonomic scope" value="Eukaryota"/>
</dbReference>
<dbReference type="HOGENOM" id="CLU_093901_2_1_1"/>
<dbReference type="InParanoid" id="Q6CPA6"/>
<dbReference type="OMA" id="FVKQQEG"/>
<dbReference type="Proteomes" id="UP000000598">
    <property type="component" value="Chromosome E"/>
</dbReference>
<dbReference type="GO" id="GO:0000123">
    <property type="term" value="C:histone acetyltransferase complex"/>
    <property type="evidence" value="ECO:0007669"/>
    <property type="project" value="InterPro"/>
</dbReference>
<dbReference type="GO" id="GO:0005634">
    <property type="term" value="C:nucleus"/>
    <property type="evidence" value="ECO:0007669"/>
    <property type="project" value="UniProtKB-SubCell"/>
</dbReference>
<dbReference type="GO" id="GO:0006325">
    <property type="term" value="P:chromatin organization"/>
    <property type="evidence" value="ECO:0007669"/>
    <property type="project" value="UniProtKB-KW"/>
</dbReference>
<dbReference type="GO" id="GO:0006281">
    <property type="term" value="P:DNA repair"/>
    <property type="evidence" value="ECO:0007669"/>
    <property type="project" value="UniProtKB-KW"/>
</dbReference>
<dbReference type="InterPro" id="IPR015418">
    <property type="entry name" value="Eaf6"/>
</dbReference>
<dbReference type="PANTHER" id="PTHR13476">
    <property type="entry name" value="CHROMATIN MODIFICATION-RELATED PROTEIN MEAF6"/>
    <property type="match status" value="1"/>
</dbReference>
<dbReference type="Pfam" id="PF09340">
    <property type="entry name" value="NuA4"/>
    <property type="match status" value="1"/>
</dbReference>
<reference key="1">
    <citation type="journal article" date="2004" name="Nature">
        <title>Genome evolution in yeasts.</title>
        <authorList>
            <person name="Dujon B."/>
            <person name="Sherman D."/>
            <person name="Fischer G."/>
            <person name="Durrens P."/>
            <person name="Casaregola S."/>
            <person name="Lafontaine I."/>
            <person name="de Montigny J."/>
            <person name="Marck C."/>
            <person name="Neuveglise C."/>
            <person name="Talla E."/>
            <person name="Goffard N."/>
            <person name="Frangeul L."/>
            <person name="Aigle M."/>
            <person name="Anthouard V."/>
            <person name="Babour A."/>
            <person name="Barbe V."/>
            <person name="Barnay S."/>
            <person name="Blanchin S."/>
            <person name="Beckerich J.-M."/>
            <person name="Beyne E."/>
            <person name="Bleykasten C."/>
            <person name="Boisrame A."/>
            <person name="Boyer J."/>
            <person name="Cattolico L."/>
            <person name="Confanioleri F."/>
            <person name="de Daruvar A."/>
            <person name="Despons L."/>
            <person name="Fabre E."/>
            <person name="Fairhead C."/>
            <person name="Ferry-Dumazet H."/>
            <person name="Groppi A."/>
            <person name="Hantraye F."/>
            <person name="Hennequin C."/>
            <person name="Jauniaux N."/>
            <person name="Joyet P."/>
            <person name="Kachouri R."/>
            <person name="Kerrest A."/>
            <person name="Koszul R."/>
            <person name="Lemaire M."/>
            <person name="Lesur I."/>
            <person name="Ma L."/>
            <person name="Muller H."/>
            <person name="Nicaud J.-M."/>
            <person name="Nikolski M."/>
            <person name="Oztas S."/>
            <person name="Ozier-Kalogeropoulos O."/>
            <person name="Pellenz S."/>
            <person name="Potier S."/>
            <person name="Richard G.-F."/>
            <person name="Straub M.-L."/>
            <person name="Suleau A."/>
            <person name="Swennen D."/>
            <person name="Tekaia F."/>
            <person name="Wesolowski-Louvel M."/>
            <person name="Westhof E."/>
            <person name="Wirth B."/>
            <person name="Zeniou-Meyer M."/>
            <person name="Zivanovic Y."/>
            <person name="Bolotin-Fukuhara M."/>
            <person name="Thierry A."/>
            <person name="Bouchier C."/>
            <person name="Caudron B."/>
            <person name="Scarpelli C."/>
            <person name="Gaillardin C."/>
            <person name="Weissenbach J."/>
            <person name="Wincker P."/>
            <person name="Souciet J.-L."/>
        </authorList>
    </citation>
    <scope>NUCLEOTIDE SEQUENCE [LARGE SCALE GENOMIC DNA]</scope>
    <source>
        <strain>ATCC 8585 / CBS 2359 / DSM 70799 / NBRC 1267 / NRRL Y-1140 / WM37</strain>
    </source>
</reference>
<feature type="chain" id="PRO_0000086897" description="Chromatin modification-related protein EAF6">
    <location>
        <begin position="1"/>
        <end position="115"/>
    </location>
</feature>
<feature type="coiled-coil region" evidence="2">
    <location>
        <begin position="1"/>
        <end position="43"/>
    </location>
</feature>
<proteinExistence type="inferred from homology"/>
<comment type="function">
    <text evidence="1">Component of the NuA4 histone acetyltransferase complex which is involved in transcriptional activation of selected genes principally by acetylation of nucleosomal histone H4 and H2A. The NuA4 complex is also involved in DNA repair (By similarity).</text>
</comment>
<comment type="subunit">
    <text evidence="1">Component of the NuA4 histone acetyltransferase complex.</text>
</comment>
<comment type="subcellular location">
    <subcellularLocation>
        <location evidence="1">Nucleus</location>
    </subcellularLocation>
</comment>
<comment type="similarity">
    <text evidence="3">Belongs to the EAF6 family.</text>
</comment>
<accession>Q6CPA6</accession>
<evidence type="ECO:0000250" key="1"/>
<evidence type="ECO:0000255" key="2"/>
<evidence type="ECO:0000305" key="3"/>
<organism>
    <name type="scientific">Kluyveromyces lactis (strain ATCC 8585 / CBS 2359 / DSM 70799 / NBRC 1267 / NRRL Y-1140 / WM37)</name>
    <name type="common">Yeast</name>
    <name type="synonym">Candida sphaerica</name>
    <dbReference type="NCBI Taxonomy" id="284590"/>
    <lineage>
        <taxon>Eukaryota</taxon>
        <taxon>Fungi</taxon>
        <taxon>Dikarya</taxon>
        <taxon>Ascomycota</taxon>
        <taxon>Saccharomycotina</taxon>
        <taxon>Saccharomycetes</taxon>
        <taxon>Saccharomycetales</taxon>
        <taxon>Saccharomycetaceae</taxon>
        <taxon>Kluyveromyces</taxon>
    </lineage>
</organism>
<sequence length="115" mass="13269">MDEQKKEYEKLKKKLRDALVQKKQLEAKWNSLEQEVYDKETEYLSQKPSSRMGNILLGFQGFNKSSSAQQILSDHSHSSNAQPLDDNDRIFSLSSYLFAKQLAASNHQEQTKSND</sequence>